<accession>Q2I2R1</accession>
<evidence type="ECO:0000250" key="1"/>
<evidence type="ECO:0000255" key="2"/>
<evidence type="ECO:0000305" key="3"/>
<protein>
    <recommendedName>
        <fullName>Conotoxin Lt6.4</fullName>
    </recommendedName>
    <alternativeName>
        <fullName>Lt6d</fullName>
    </alternativeName>
</protein>
<dbReference type="EMBL" id="DQ345371">
    <property type="protein sequence ID" value="ABC74979.1"/>
    <property type="molecule type" value="mRNA"/>
</dbReference>
<dbReference type="SMR" id="Q2I2R1"/>
<dbReference type="ConoServer" id="1157">
    <property type="toxin name" value="Lt6d precursor"/>
</dbReference>
<dbReference type="GO" id="GO:0005576">
    <property type="term" value="C:extracellular region"/>
    <property type="evidence" value="ECO:0007669"/>
    <property type="project" value="UniProtKB-SubCell"/>
</dbReference>
<dbReference type="GO" id="GO:0008200">
    <property type="term" value="F:ion channel inhibitor activity"/>
    <property type="evidence" value="ECO:0007669"/>
    <property type="project" value="InterPro"/>
</dbReference>
<dbReference type="GO" id="GO:0090729">
    <property type="term" value="F:toxin activity"/>
    <property type="evidence" value="ECO:0007669"/>
    <property type="project" value="UniProtKB-KW"/>
</dbReference>
<dbReference type="InterPro" id="IPR004214">
    <property type="entry name" value="Conotoxin"/>
</dbReference>
<dbReference type="Pfam" id="PF02950">
    <property type="entry name" value="Conotoxin"/>
    <property type="match status" value="1"/>
</dbReference>
<feature type="signal peptide" evidence="2">
    <location>
        <begin position="1"/>
        <end position="22"/>
    </location>
</feature>
<feature type="propeptide" id="PRO_0000315498" evidence="3">
    <location>
        <begin position="23"/>
        <end position="50"/>
    </location>
</feature>
<feature type="peptide" id="PRO_0000315499" description="Conotoxin Lt6.4">
    <location>
        <begin position="52"/>
        <end position="88"/>
    </location>
</feature>
<feature type="disulfide bond" evidence="1">
    <location>
        <begin position="52"/>
        <end position="67"/>
    </location>
</feature>
<feature type="disulfide bond" evidence="1">
    <location>
        <begin position="59"/>
        <end position="71"/>
    </location>
</feature>
<feature type="disulfide bond" evidence="1">
    <location>
        <begin position="66"/>
        <end position="80"/>
    </location>
</feature>
<comment type="subcellular location">
    <subcellularLocation>
        <location evidence="1">Secreted</location>
    </subcellularLocation>
</comment>
<comment type="tissue specificity">
    <text>Expressed by the venom duct.</text>
</comment>
<comment type="domain">
    <text evidence="1">The presence of a 'disulfide through disulfide knot' structurally defines this protein as a knottin.</text>
</comment>
<comment type="domain">
    <text>The cysteine framework is VI/VII (C-C-CC-C-C).</text>
</comment>
<comment type="similarity">
    <text evidence="3">Belongs to the conotoxin O1 superfamily.</text>
</comment>
<proteinExistence type="evidence at transcript level"/>
<keyword id="KW-1015">Disulfide bond</keyword>
<keyword id="KW-0960">Knottin</keyword>
<keyword id="KW-0964">Secreted</keyword>
<keyword id="KW-0732">Signal</keyword>
<keyword id="KW-0800">Toxin</keyword>
<sequence length="89" mass="9886">MKLTCVPIVAMLFLMACQLITADYSREKHGYSAEKSSDKIQDSFYSKLTKRCTDEGGDCDPGNHNCCRGSCLVLQHKAVCGILYTMVSR</sequence>
<reference key="1">
    <citation type="journal article" date="2006" name="Genomics">
        <title>Diversity and evolution of conotoxins based on gene expression profiling of Conus litteratus.</title>
        <authorList>
            <person name="Pi C."/>
            <person name="Liu J."/>
            <person name="Peng C."/>
            <person name="Liu Y."/>
            <person name="Jiang X."/>
            <person name="Zhao Y."/>
            <person name="Tang S."/>
            <person name="Wang L."/>
            <person name="Dong M."/>
            <person name="Chen S."/>
            <person name="Xu A."/>
        </authorList>
    </citation>
    <scope>NUCLEOTIDE SEQUENCE [MRNA]</scope>
    <source>
        <tissue>Venom duct</tissue>
    </source>
</reference>
<organism>
    <name type="scientific">Conus litteratus</name>
    <name type="common">Lettered cone</name>
    <dbReference type="NCBI Taxonomy" id="89445"/>
    <lineage>
        <taxon>Eukaryota</taxon>
        <taxon>Metazoa</taxon>
        <taxon>Spiralia</taxon>
        <taxon>Lophotrochozoa</taxon>
        <taxon>Mollusca</taxon>
        <taxon>Gastropoda</taxon>
        <taxon>Caenogastropoda</taxon>
        <taxon>Neogastropoda</taxon>
        <taxon>Conoidea</taxon>
        <taxon>Conidae</taxon>
        <taxon>Conus</taxon>
        <taxon>Elisaconus</taxon>
    </lineage>
</organism>
<name>O164_CONLT</name>